<reference key="1">
    <citation type="journal article" date="2010" name="Genome Biol.">
        <title>Structure and dynamics of the pan-genome of Streptococcus pneumoniae and closely related species.</title>
        <authorList>
            <person name="Donati C."/>
            <person name="Hiller N.L."/>
            <person name="Tettelin H."/>
            <person name="Muzzi A."/>
            <person name="Croucher N.J."/>
            <person name="Angiuoli S.V."/>
            <person name="Oggioni M."/>
            <person name="Dunning Hotopp J.C."/>
            <person name="Hu F.Z."/>
            <person name="Riley D.R."/>
            <person name="Covacci A."/>
            <person name="Mitchell T.J."/>
            <person name="Bentley S.D."/>
            <person name="Kilian M."/>
            <person name="Ehrlich G.D."/>
            <person name="Rappuoli R."/>
            <person name="Moxon E.R."/>
            <person name="Masignani V."/>
        </authorList>
    </citation>
    <scope>NUCLEOTIDE SEQUENCE [LARGE SCALE GENOMIC DNA]</scope>
    <source>
        <strain>70585</strain>
    </source>
</reference>
<keyword id="KW-0131">Cell cycle</keyword>
<keyword id="KW-0132">Cell division</keyword>
<keyword id="KW-0159">Chromosome partition</keyword>
<keyword id="KW-0963">Cytoplasm</keyword>
<keyword id="KW-0229">DNA integration</keyword>
<keyword id="KW-0233">DNA recombination</keyword>
<keyword id="KW-0238">DNA-binding</keyword>
<evidence type="ECO:0000255" key="1">
    <source>
        <dbReference type="HAMAP-Rule" id="MF_01816"/>
    </source>
</evidence>
<evidence type="ECO:0000255" key="2">
    <source>
        <dbReference type="PROSITE-ProRule" id="PRU01246"/>
    </source>
</evidence>
<evidence type="ECO:0000255" key="3">
    <source>
        <dbReference type="PROSITE-ProRule" id="PRU01248"/>
    </source>
</evidence>
<proteinExistence type="inferred from homology"/>
<dbReference type="EMBL" id="CP000918">
    <property type="protein sequence ID" value="ACO17137.1"/>
    <property type="molecule type" value="Genomic_DNA"/>
</dbReference>
<dbReference type="RefSeq" id="WP_000817884.1">
    <property type="nucleotide sequence ID" value="NC_012468.1"/>
</dbReference>
<dbReference type="SMR" id="C1C7D0"/>
<dbReference type="KEGG" id="snm:SP70585_1211"/>
<dbReference type="HOGENOM" id="CLU_027562_9_6_9"/>
<dbReference type="Proteomes" id="UP000002211">
    <property type="component" value="Chromosome"/>
</dbReference>
<dbReference type="GO" id="GO:0005737">
    <property type="term" value="C:cytoplasm"/>
    <property type="evidence" value="ECO:0007669"/>
    <property type="project" value="UniProtKB-SubCell"/>
</dbReference>
<dbReference type="GO" id="GO:0003677">
    <property type="term" value="F:DNA binding"/>
    <property type="evidence" value="ECO:0007669"/>
    <property type="project" value="UniProtKB-KW"/>
</dbReference>
<dbReference type="GO" id="GO:0009037">
    <property type="term" value="F:tyrosine-based site-specific recombinase activity"/>
    <property type="evidence" value="ECO:0007669"/>
    <property type="project" value="UniProtKB-UniRule"/>
</dbReference>
<dbReference type="GO" id="GO:0051301">
    <property type="term" value="P:cell division"/>
    <property type="evidence" value="ECO:0007669"/>
    <property type="project" value="UniProtKB-KW"/>
</dbReference>
<dbReference type="GO" id="GO:0007059">
    <property type="term" value="P:chromosome segregation"/>
    <property type="evidence" value="ECO:0007669"/>
    <property type="project" value="UniProtKB-UniRule"/>
</dbReference>
<dbReference type="GO" id="GO:0006310">
    <property type="term" value="P:DNA recombination"/>
    <property type="evidence" value="ECO:0007669"/>
    <property type="project" value="UniProtKB-UniRule"/>
</dbReference>
<dbReference type="Gene3D" id="1.10.150.130">
    <property type="match status" value="1"/>
</dbReference>
<dbReference type="Gene3D" id="1.10.443.10">
    <property type="entry name" value="Intergrase catalytic core"/>
    <property type="match status" value="1"/>
</dbReference>
<dbReference type="HAMAP" id="MF_01816">
    <property type="entry name" value="Recomb_XerS"/>
    <property type="match status" value="1"/>
</dbReference>
<dbReference type="InterPro" id="IPR044068">
    <property type="entry name" value="CB"/>
</dbReference>
<dbReference type="InterPro" id="IPR011010">
    <property type="entry name" value="DNA_brk_join_enz"/>
</dbReference>
<dbReference type="InterPro" id="IPR013762">
    <property type="entry name" value="Integrase-like_cat_sf"/>
</dbReference>
<dbReference type="InterPro" id="IPR002104">
    <property type="entry name" value="Integrase_catalytic"/>
</dbReference>
<dbReference type="InterPro" id="IPR010998">
    <property type="entry name" value="Integrase_recombinase_N"/>
</dbReference>
<dbReference type="InterPro" id="IPR004107">
    <property type="entry name" value="Integrase_SAM-like_N"/>
</dbReference>
<dbReference type="InterPro" id="IPR023670">
    <property type="entry name" value="Recomb_XerS"/>
</dbReference>
<dbReference type="InterPro" id="IPR050090">
    <property type="entry name" value="Tyrosine_recombinase_XerCD"/>
</dbReference>
<dbReference type="NCBIfam" id="NF003462">
    <property type="entry name" value="PRK05084.1"/>
    <property type="match status" value="1"/>
</dbReference>
<dbReference type="PANTHER" id="PTHR30349">
    <property type="entry name" value="PHAGE INTEGRASE-RELATED"/>
    <property type="match status" value="1"/>
</dbReference>
<dbReference type="PANTHER" id="PTHR30349:SF77">
    <property type="entry name" value="TYROSINE RECOMBINASE XERC"/>
    <property type="match status" value="1"/>
</dbReference>
<dbReference type="Pfam" id="PF02899">
    <property type="entry name" value="Phage_int_SAM_1"/>
    <property type="match status" value="1"/>
</dbReference>
<dbReference type="Pfam" id="PF00589">
    <property type="entry name" value="Phage_integrase"/>
    <property type="match status" value="1"/>
</dbReference>
<dbReference type="SUPFAM" id="SSF56349">
    <property type="entry name" value="DNA breaking-rejoining enzymes"/>
    <property type="match status" value="1"/>
</dbReference>
<dbReference type="PROSITE" id="PS51900">
    <property type="entry name" value="CB"/>
    <property type="match status" value="1"/>
</dbReference>
<dbReference type="PROSITE" id="PS51898">
    <property type="entry name" value="TYR_RECOMBINASE"/>
    <property type="match status" value="1"/>
</dbReference>
<comment type="function">
    <text evidence="1">Site-specific tyrosine recombinase, which acts by catalyzing the cutting and rejoining of the recombining DNA molecules. Essential to convert dimers of the bacterial chromosome into monomers to permit their segregation at cell division.</text>
</comment>
<comment type="activity regulation">
    <text evidence="1">FtsK is required for recombination.</text>
</comment>
<comment type="subcellular location">
    <subcellularLocation>
        <location evidence="1">Cytoplasm</location>
    </subcellularLocation>
</comment>
<comment type="similarity">
    <text evidence="1">Belongs to the 'phage' integrase family. XerS subfamily.</text>
</comment>
<accession>C1C7D0</accession>
<sequence>MKREILLERIDKLKQLMPWYVLEYYQSKLAVPYSFTTLYEYLKEYDRFFSWVLESGISNADKISDIPLSVLENMSKKDMESFILYLRERPLLNANTTKQGVSQTTINRTLSALSSLYKYLTEEVENDQGEPYFYRNVMKKVSTKKKKETLAARAENIKQKLFLGDETEGFLTYIDQEHPQQLSNRALSSFNKNKERDLAIIALLLASGVRLSEAVNLDLRDLNLKMMVIDVTRKGGKRDSVNVAAFAKPYLENYLAIRNQRYKTEKTDTALFLTLYRGVPNRIDASSVEKMVAKYSEDFKVRVTPHKLRHTLATRLYDATKSQVLVSHQLGHASTQVTDLYTHIVSDEQKNALDSL</sequence>
<organism>
    <name type="scientific">Streptococcus pneumoniae (strain 70585)</name>
    <dbReference type="NCBI Taxonomy" id="488221"/>
    <lineage>
        <taxon>Bacteria</taxon>
        <taxon>Bacillati</taxon>
        <taxon>Bacillota</taxon>
        <taxon>Bacilli</taxon>
        <taxon>Lactobacillales</taxon>
        <taxon>Streptococcaceae</taxon>
        <taxon>Streptococcus</taxon>
    </lineage>
</organism>
<feature type="chain" id="PRO_1000187914" description="Tyrosine recombinase XerS">
    <location>
        <begin position="1"/>
        <end position="356"/>
    </location>
</feature>
<feature type="domain" description="Core-binding (CB)" evidence="3">
    <location>
        <begin position="16"/>
        <end position="121"/>
    </location>
</feature>
<feature type="domain" description="Tyr recombinase" evidence="2">
    <location>
        <begin position="169"/>
        <end position="354"/>
    </location>
</feature>
<feature type="active site" evidence="1">
    <location>
        <position position="210"/>
    </location>
</feature>
<feature type="active site" evidence="1">
    <location>
        <position position="234"/>
    </location>
</feature>
<feature type="active site" evidence="1">
    <location>
        <position position="306"/>
    </location>
</feature>
<feature type="active site" evidence="1">
    <location>
        <position position="309"/>
    </location>
</feature>
<feature type="active site" evidence="1">
    <location>
        <position position="332"/>
    </location>
</feature>
<feature type="active site" description="O-(3'-phospho-DNA)-tyrosine intermediate" evidence="1">
    <location>
        <position position="341"/>
    </location>
</feature>
<name>XERS_STRP7</name>
<protein>
    <recommendedName>
        <fullName evidence="1">Tyrosine recombinase XerS</fullName>
    </recommendedName>
</protein>
<gene>
    <name evidence="1" type="primary">xerS</name>
    <name type="ordered locus">SP70585_1211</name>
</gene>